<name>ARAA_SHESM</name>
<protein>
    <recommendedName>
        <fullName evidence="1">L-arabinose isomerase</fullName>
        <ecNumber evidence="1">5.3.1.4</ecNumber>
    </recommendedName>
</protein>
<reference key="1">
    <citation type="submission" date="2006-08" db="EMBL/GenBank/DDBJ databases">
        <title>Complete sequence of Shewanella sp. MR-4.</title>
        <authorList>
            <consortium name="US DOE Joint Genome Institute"/>
            <person name="Copeland A."/>
            <person name="Lucas S."/>
            <person name="Lapidus A."/>
            <person name="Barry K."/>
            <person name="Detter J.C."/>
            <person name="Glavina del Rio T."/>
            <person name="Hammon N."/>
            <person name="Israni S."/>
            <person name="Dalin E."/>
            <person name="Tice H."/>
            <person name="Pitluck S."/>
            <person name="Kiss H."/>
            <person name="Brettin T."/>
            <person name="Bruce D."/>
            <person name="Han C."/>
            <person name="Tapia R."/>
            <person name="Gilna P."/>
            <person name="Schmutz J."/>
            <person name="Larimer F."/>
            <person name="Land M."/>
            <person name="Hauser L."/>
            <person name="Kyrpides N."/>
            <person name="Mikhailova N."/>
            <person name="Nealson K."/>
            <person name="Konstantinidis K."/>
            <person name="Klappenbach J."/>
            <person name="Tiedje J."/>
            <person name="Richardson P."/>
        </authorList>
    </citation>
    <scope>NUCLEOTIDE SEQUENCE [LARGE SCALE GENOMIC DNA]</scope>
    <source>
        <strain>MR-4</strain>
    </source>
</reference>
<organism>
    <name type="scientific">Shewanella sp. (strain MR-4)</name>
    <dbReference type="NCBI Taxonomy" id="60480"/>
    <lineage>
        <taxon>Bacteria</taxon>
        <taxon>Pseudomonadati</taxon>
        <taxon>Pseudomonadota</taxon>
        <taxon>Gammaproteobacteria</taxon>
        <taxon>Alteromonadales</taxon>
        <taxon>Shewanellaceae</taxon>
        <taxon>Shewanella</taxon>
    </lineage>
</organism>
<dbReference type="EC" id="5.3.1.4" evidence="1"/>
<dbReference type="EMBL" id="CP000446">
    <property type="protein sequence ID" value="ABI39052.1"/>
    <property type="molecule type" value="Genomic_DNA"/>
</dbReference>
<dbReference type="RefSeq" id="WP_011622745.1">
    <property type="nucleotide sequence ID" value="NC_008321.1"/>
</dbReference>
<dbReference type="SMR" id="Q0HIR5"/>
<dbReference type="KEGG" id="she:Shewmr4_1979"/>
<dbReference type="HOGENOM" id="CLU_045663_0_0_6"/>
<dbReference type="UniPathway" id="UPA00145">
    <property type="reaction ID" value="UER00565"/>
</dbReference>
<dbReference type="GO" id="GO:0005829">
    <property type="term" value="C:cytosol"/>
    <property type="evidence" value="ECO:0007669"/>
    <property type="project" value="TreeGrafter"/>
</dbReference>
<dbReference type="GO" id="GO:0008733">
    <property type="term" value="F:L-arabinose isomerase activity"/>
    <property type="evidence" value="ECO:0007669"/>
    <property type="project" value="UniProtKB-UniRule"/>
</dbReference>
<dbReference type="GO" id="GO:0030145">
    <property type="term" value="F:manganese ion binding"/>
    <property type="evidence" value="ECO:0007669"/>
    <property type="project" value="UniProtKB-UniRule"/>
</dbReference>
<dbReference type="GO" id="GO:0019569">
    <property type="term" value="P:L-arabinose catabolic process to xylulose 5-phosphate"/>
    <property type="evidence" value="ECO:0007669"/>
    <property type="project" value="UniProtKB-UniRule"/>
</dbReference>
<dbReference type="CDD" id="cd03557">
    <property type="entry name" value="L-arabinose_isomerase"/>
    <property type="match status" value="1"/>
</dbReference>
<dbReference type="Gene3D" id="3.40.50.10940">
    <property type="match status" value="1"/>
</dbReference>
<dbReference type="HAMAP" id="MF_00519">
    <property type="entry name" value="Arabinose_Isome"/>
    <property type="match status" value="1"/>
</dbReference>
<dbReference type="InterPro" id="IPR024664">
    <property type="entry name" value="Ara_Isoase_C"/>
</dbReference>
<dbReference type="InterPro" id="IPR055390">
    <property type="entry name" value="AraA_central"/>
</dbReference>
<dbReference type="InterPro" id="IPR055389">
    <property type="entry name" value="AraA_N"/>
</dbReference>
<dbReference type="InterPro" id="IPR038583">
    <property type="entry name" value="AraA_N_sf"/>
</dbReference>
<dbReference type="InterPro" id="IPR004216">
    <property type="entry name" value="Fuc/Ara_isomerase_C"/>
</dbReference>
<dbReference type="InterPro" id="IPR009015">
    <property type="entry name" value="Fucose_isomerase_N/cen_sf"/>
</dbReference>
<dbReference type="InterPro" id="IPR003762">
    <property type="entry name" value="Lara_isomerase"/>
</dbReference>
<dbReference type="NCBIfam" id="NF002795">
    <property type="entry name" value="PRK02929.1"/>
    <property type="match status" value="1"/>
</dbReference>
<dbReference type="PANTHER" id="PTHR38464">
    <property type="entry name" value="L-ARABINOSE ISOMERASE"/>
    <property type="match status" value="1"/>
</dbReference>
<dbReference type="PANTHER" id="PTHR38464:SF1">
    <property type="entry name" value="L-ARABINOSE ISOMERASE"/>
    <property type="match status" value="1"/>
</dbReference>
<dbReference type="Pfam" id="PF24856">
    <property type="entry name" value="AraA_central"/>
    <property type="match status" value="1"/>
</dbReference>
<dbReference type="Pfam" id="PF02610">
    <property type="entry name" value="AraA_N"/>
    <property type="match status" value="1"/>
</dbReference>
<dbReference type="Pfam" id="PF11762">
    <property type="entry name" value="Arabinose_Iso_C"/>
    <property type="match status" value="1"/>
</dbReference>
<dbReference type="PIRSF" id="PIRSF001478">
    <property type="entry name" value="L-ara_isomerase"/>
    <property type="match status" value="1"/>
</dbReference>
<dbReference type="SUPFAM" id="SSF50443">
    <property type="entry name" value="FucI/AraA C-terminal domain-like"/>
    <property type="match status" value="1"/>
</dbReference>
<dbReference type="SUPFAM" id="SSF53743">
    <property type="entry name" value="FucI/AraA N-terminal and middle domains"/>
    <property type="match status" value="1"/>
</dbReference>
<proteinExistence type="inferred from homology"/>
<feature type="chain" id="PRO_0000312618" description="L-arabinose isomerase">
    <location>
        <begin position="1"/>
        <end position="500"/>
    </location>
</feature>
<feature type="binding site" evidence="1">
    <location>
        <position position="306"/>
    </location>
    <ligand>
        <name>Mn(2+)</name>
        <dbReference type="ChEBI" id="CHEBI:29035"/>
    </ligand>
</feature>
<feature type="binding site" evidence="1">
    <location>
        <position position="333"/>
    </location>
    <ligand>
        <name>Mn(2+)</name>
        <dbReference type="ChEBI" id="CHEBI:29035"/>
    </ligand>
</feature>
<feature type="binding site" evidence="1">
    <location>
        <position position="349"/>
    </location>
    <ligand>
        <name>Mn(2+)</name>
        <dbReference type="ChEBI" id="CHEBI:29035"/>
    </ligand>
</feature>
<feature type="binding site" evidence="1">
    <location>
        <position position="448"/>
    </location>
    <ligand>
        <name>Mn(2+)</name>
        <dbReference type="ChEBI" id="CHEBI:29035"/>
    </ligand>
</feature>
<keyword id="KW-0054">Arabinose catabolism</keyword>
<keyword id="KW-0119">Carbohydrate metabolism</keyword>
<keyword id="KW-0413">Isomerase</keyword>
<keyword id="KW-0464">Manganese</keyword>
<keyword id="KW-0479">Metal-binding</keyword>
<evidence type="ECO:0000255" key="1">
    <source>
        <dbReference type="HAMAP-Rule" id="MF_00519"/>
    </source>
</evidence>
<gene>
    <name evidence="1" type="primary">araA</name>
    <name type="ordered locus">Shewmr4_1979</name>
</gene>
<sequence length="500" mass="55331">MKAFKQKQVWFITGSQDLYGPKVLEQVAKNSEQIVYGFNESSAISIEVVYKPTVKSPREIHAVCQAANSDENCVGVILWMHTFSPAKMWIAGLNELSKPFMHLHTQFNAELPWSEINMNYMNTHQSAHGCREFGFIGTRMRKERKVVVGHWQSSDVQAQIDDWCRAAAGWHESQNLRIARFGDNMRQVAVTEGDKVAAQIQFGYEVHAYSLGELNEAIAAIAEGDVTAQLDRYASEYQVGNELFGDEYQLDRLRKEAKIELGLTQFLTQGGFGAFTNCFENLTGMTGLPGLATQRLMANGFGYGGEGDWKTAAMVRIMKVMGQGRAGGTSFMEDYTYNFGATDQVLGAHMLEVCPSIAAAKPRLEVHRHTIGVRCDVPRLLFTGKAGPAINVSTIDLGNRFRIILNELDTVTPPQDLPNLPVASALWEPRPNLAVAAAAWIHAGGAHHSAYSQAITTDQIVDFAEMAGAELVIIDADTKIREFKNELRQNSVYYGLARGL</sequence>
<comment type="function">
    <text evidence="1">Catalyzes the conversion of L-arabinose to L-ribulose.</text>
</comment>
<comment type="catalytic activity">
    <reaction evidence="1">
        <text>beta-L-arabinopyranose = L-ribulose</text>
        <dbReference type="Rhea" id="RHEA:14821"/>
        <dbReference type="ChEBI" id="CHEBI:16880"/>
        <dbReference type="ChEBI" id="CHEBI:40886"/>
        <dbReference type="EC" id="5.3.1.4"/>
    </reaction>
</comment>
<comment type="cofactor">
    <cofactor evidence="1">
        <name>Mn(2+)</name>
        <dbReference type="ChEBI" id="CHEBI:29035"/>
    </cofactor>
    <text evidence="1">Binds 1 Mn(2+) ion per subunit.</text>
</comment>
<comment type="pathway">
    <text evidence="1">Carbohydrate degradation; L-arabinose degradation via L-ribulose; D-xylulose 5-phosphate from L-arabinose (bacterial route): step 1/3.</text>
</comment>
<comment type="similarity">
    <text evidence="1">Belongs to the arabinose isomerase family.</text>
</comment>
<accession>Q0HIR5</accession>